<keyword id="KW-0067">ATP-binding</keyword>
<keyword id="KW-1003">Cell membrane</keyword>
<keyword id="KW-0472">Membrane</keyword>
<keyword id="KW-0547">Nucleotide-binding</keyword>
<keyword id="KW-1185">Reference proteome</keyword>
<keyword id="KW-0813">Transport</keyword>
<reference key="1">
    <citation type="journal article" date="2001" name="Proc. Natl. Acad. Sci. U.S.A.">
        <title>Complete genome sequence of an M1 strain of Streptococcus pyogenes.</title>
        <authorList>
            <person name="Ferretti J.J."/>
            <person name="McShan W.M."/>
            <person name="Ajdic D.J."/>
            <person name="Savic D.J."/>
            <person name="Savic G."/>
            <person name="Lyon K."/>
            <person name="Primeaux C."/>
            <person name="Sezate S."/>
            <person name="Suvorov A.N."/>
            <person name="Kenton S."/>
            <person name="Lai H.S."/>
            <person name="Lin S.P."/>
            <person name="Qian Y."/>
            <person name="Jia H.G."/>
            <person name="Najar F.Z."/>
            <person name="Ren Q."/>
            <person name="Zhu H."/>
            <person name="Song L."/>
            <person name="White J."/>
            <person name="Yuan X."/>
            <person name="Clifton S.W."/>
            <person name="Roe B.A."/>
            <person name="McLaughlin R.E."/>
        </authorList>
    </citation>
    <scope>NUCLEOTIDE SEQUENCE [LARGE SCALE GENOMIC DNA]</scope>
    <source>
        <strain>ATCC 700294 / SF370 / Serotype M1</strain>
    </source>
</reference>
<reference key="2">
    <citation type="journal article" date="2005" name="J. Infect. Dis.">
        <title>Evolutionary origin and emergence of a highly successful clone of serotype M1 group A Streptococcus involved multiple horizontal gene transfer events.</title>
        <authorList>
            <person name="Sumby P."/>
            <person name="Porcella S.F."/>
            <person name="Madrigal A.G."/>
            <person name="Barbian K.D."/>
            <person name="Virtaneva K."/>
            <person name="Ricklefs S.M."/>
            <person name="Sturdevant D.E."/>
            <person name="Graham M.R."/>
            <person name="Vuopio-Varkila J."/>
            <person name="Hoe N.P."/>
            <person name="Musser J.M."/>
        </authorList>
    </citation>
    <scope>NUCLEOTIDE SEQUENCE [LARGE SCALE GENOMIC DNA]</scope>
    <source>
        <strain>ATCC BAA-947 / MGAS5005 / Serotype M1</strain>
    </source>
</reference>
<protein>
    <recommendedName>
        <fullName>Probable ABC transporter ATP-binding protein SPy_0285/M5005_Spy0242</fullName>
    </recommendedName>
</protein>
<gene>
    <name type="ordered locus">SPy_0285</name>
    <name type="ordered locus">M5005_Spy0242</name>
</gene>
<feature type="chain" id="PRO_0000093212" description="Probable ABC transporter ATP-binding protein SPy_0285/M5005_Spy0242">
    <location>
        <begin position="1"/>
        <end position="256"/>
    </location>
</feature>
<feature type="domain" description="ABC transporter" evidence="2">
    <location>
        <begin position="4"/>
        <end position="246"/>
    </location>
</feature>
<feature type="binding site" evidence="2">
    <location>
        <begin position="36"/>
        <end position="43"/>
    </location>
    <ligand>
        <name>ATP</name>
        <dbReference type="ChEBI" id="CHEBI:30616"/>
    </ligand>
</feature>
<proteinExistence type="inferred from homology"/>
<dbReference type="EMBL" id="AE004092">
    <property type="protein sequence ID" value="AAK33355.1"/>
    <property type="molecule type" value="Genomic_DNA"/>
</dbReference>
<dbReference type="EMBL" id="CP000017">
    <property type="protein sequence ID" value="AAZ50861.1"/>
    <property type="molecule type" value="Genomic_DNA"/>
</dbReference>
<dbReference type="RefSeq" id="NP_268634.1">
    <property type="nucleotide sequence ID" value="NC_002737.2"/>
</dbReference>
<dbReference type="SMR" id="Q9A1G5"/>
<dbReference type="PaxDb" id="1314-HKU360_00281"/>
<dbReference type="KEGG" id="spy:SPy_0285"/>
<dbReference type="KEGG" id="spz:M5005_Spy0242"/>
<dbReference type="PATRIC" id="fig|160490.10.peg.250"/>
<dbReference type="HOGENOM" id="CLU_000604_48_1_9"/>
<dbReference type="OMA" id="MAMLEPK"/>
<dbReference type="Proteomes" id="UP000000750">
    <property type="component" value="Chromosome"/>
</dbReference>
<dbReference type="GO" id="GO:0005886">
    <property type="term" value="C:plasma membrane"/>
    <property type="evidence" value="ECO:0007669"/>
    <property type="project" value="UniProtKB-SubCell"/>
</dbReference>
<dbReference type="GO" id="GO:0005524">
    <property type="term" value="F:ATP binding"/>
    <property type="evidence" value="ECO:0007669"/>
    <property type="project" value="UniProtKB-KW"/>
</dbReference>
<dbReference type="GO" id="GO:0016887">
    <property type="term" value="F:ATP hydrolysis activity"/>
    <property type="evidence" value="ECO:0007669"/>
    <property type="project" value="InterPro"/>
</dbReference>
<dbReference type="CDD" id="cd03217">
    <property type="entry name" value="ABC_FeS_Assembly"/>
    <property type="match status" value="1"/>
</dbReference>
<dbReference type="Gene3D" id="3.40.50.300">
    <property type="entry name" value="P-loop containing nucleotide triphosphate hydrolases"/>
    <property type="match status" value="1"/>
</dbReference>
<dbReference type="InterPro" id="IPR003593">
    <property type="entry name" value="AAA+_ATPase"/>
</dbReference>
<dbReference type="InterPro" id="IPR003439">
    <property type="entry name" value="ABC_transporter-like_ATP-bd"/>
</dbReference>
<dbReference type="InterPro" id="IPR017871">
    <property type="entry name" value="ABC_transporter-like_CS"/>
</dbReference>
<dbReference type="InterPro" id="IPR010230">
    <property type="entry name" value="FeS-cluster_ATPase_SufC"/>
</dbReference>
<dbReference type="InterPro" id="IPR027417">
    <property type="entry name" value="P-loop_NTPase"/>
</dbReference>
<dbReference type="NCBIfam" id="TIGR01978">
    <property type="entry name" value="sufC"/>
    <property type="match status" value="1"/>
</dbReference>
<dbReference type="PANTHER" id="PTHR43204">
    <property type="entry name" value="ABC TRANSPORTER I FAMILY MEMBER 6, CHLOROPLASTIC"/>
    <property type="match status" value="1"/>
</dbReference>
<dbReference type="PANTHER" id="PTHR43204:SF1">
    <property type="entry name" value="ABC TRANSPORTER I FAMILY MEMBER 6, CHLOROPLASTIC"/>
    <property type="match status" value="1"/>
</dbReference>
<dbReference type="Pfam" id="PF00005">
    <property type="entry name" value="ABC_tran"/>
    <property type="match status" value="1"/>
</dbReference>
<dbReference type="SMART" id="SM00382">
    <property type="entry name" value="AAA"/>
    <property type="match status" value="1"/>
</dbReference>
<dbReference type="SUPFAM" id="SSF52540">
    <property type="entry name" value="P-loop containing nucleoside triphosphate hydrolases"/>
    <property type="match status" value="1"/>
</dbReference>
<dbReference type="PROSITE" id="PS00211">
    <property type="entry name" value="ABC_TRANSPORTER_1"/>
    <property type="match status" value="1"/>
</dbReference>
<dbReference type="PROSITE" id="PS50893">
    <property type="entry name" value="ABC_TRANSPORTER_2"/>
    <property type="match status" value="1"/>
</dbReference>
<name>Y285_STRP1</name>
<comment type="subcellular location">
    <subcellularLocation>
        <location evidence="1">Cell membrane</location>
        <topology evidence="1">Peripheral membrane protein</topology>
    </subcellularLocation>
</comment>
<comment type="similarity">
    <text evidence="3">Belongs to the ABC transporter superfamily. Ycf16 family.</text>
</comment>
<sequence>MSILEINNLHVSIEGKEILKGVNLTLKTGEVAAIMGPNGTGKSTLSAAIMGNPNYEVTQGQILLDGVNILDLEVDERARLGLFLAMQYPSEIPGITNAEFMRAAMNAGKADEDKISVRDFITKLDEKMALLGMKEEMAERYLNEGFSGGEKKRNEILQLLMLEPKFALLDEIDSGLDIDALKVVSKGVNEMRGKDFGAMIITHYQRLLNYITPDLVHVMMDGRIVLSGDAALATRLEKEGYAGIAQDLGIEYKEES</sequence>
<accession>Q9A1G5</accession>
<accession>Q490V7</accession>
<organism>
    <name type="scientific">Streptococcus pyogenes serotype M1</name>
    <dbReference type="NCBI Taxonomy" id="301447"/>
    <lineage>
        <taxon>Bacteria</taxon>
        <taxon>Bacillati</taxon>
        <taxon>Bacillota</taxon>
        <taxon>Bacilli</taxon>
        <taxon>Lactobacillales</taxon>
        <taxon>Streptococcaceae</taxon>
        <taxon>Streptococcus</taxon>
    </lineage>
</organism>
<evidence type="ECO:0000250" key="1"/>
<evidence type="ECO:0000255" key="2">
    <source>
        <dbReference type="PROSITE-ProRule" id="PRU00434"/>
    </source>
</evidence>
<evidence type="ECO:0000305" key="3"/>